<comment type="function">
    <text evidence="1">Catalyzes the anti-1,4-elimination of the C-3 phosphate and the C-6 proR hydrogen from 5-enolpyruvylshikimate-3-phosphate (EPSP) to yield chorismate, which is the branch point compound that serves as the starting substrate for the three terminal pathways of aromatic amino acid biosynthesis. This reaction introduces a second double bond into the aromatic ring system.</text>
</comment>
<comment type="catalytic activity">
    <reaction evidence="1">
        <text>5-O-(1-carboxyvinyl)-3-phosphoshikimate = chorismate + phosphate</text>
        <dbReference type="Rhea" id="RHEA:21020"/>
        <dbReference type="ChEBI" id="CHEBI:29748"/>
        <dbReference type="ChEBI" id="CHEBI:43474"/>
        <dbReference type="ChEBI" id="CHEBI:57701"/>
        <dbReference type="EC" id="4.2.3.5"/>
    </reaction>
</comment>
<comment type="cofactor">
    <cofactor evidence="1">
        <name>FMNH2</name>
        <dbReference type="ChEBI" id="CHEBI:57618"/>
    </cofactor>
    <text evidence="1">Reduced FMN (FMNH(2)).</text>
</comment>
<comment type="pathway">
    <text evidence="1">Metabolic intermediate biosynthesis; chorismate biosynthesis; chorismate from D-erythrose 4-phosphate and phosphoenolpyruvate: step 7/7.</text>
</comment>
<comment type="subunit">
    <text evidence="1">Homotetramer.</text>
</comment>
<comment type="similarity">
    <text evidence="1">Belongs to the chorismate synthase family.</text>
</comment>
<gene>
    <name evidence="1" type="primary">aroC</name>
    <name type="ordered locus">BMA0946</name>
</gene>
<name>AROC_BURMA</name>
<reference key="1">
    <citation type="journal article" date="2004" name="Proc. Natl. Acad. Sci. U.S.A.">
        <title>Structural flexibility in the Burkholderia mallei genome.</title>
        <authorList>
            <person name="Nierman W.C."/>
            <person name="DeShazer D."/>
            <person name="Kim H.S."/>
            <person name="Tettelin H."/>
            <person name="Nelson K.E."/>
            <person name="Feldblyum T.V."/>
            <person name="Ulrich R.L."/>
            <person name="Ronning C.M."/>
            <person name="Brinkac L.M."/>
            <person name="Daugherty S.C."/>
            <person name="Davidsen T.D."/>
            <person name="DeBoy R.T."/>
            <person name="Dimitrov G."/>
            <person name="Dodson R.J."/>
            <person name="Durkin A.S."/>
            <person name="Gwinn M.L."/>
            <person name="Haft D.H."/>
            <person name="Khouri H.M."/>
            <person name="Kolonay J.F."/>
            <person name="Madupu R."/>
            <person name="Mohammoud Y."/>
            <person name="Nelson W.C."/>
            <person name="Radune D."/>
            <person name="Romero C.M."/>
            <person name="Sarria S."/>
            <person name="Selengut J."/>
            <person name="Shamblin C."/>
            <person name="Sullivan S.A."/>
            <person name="White O."/>
            <person name="Yu Y."/>
            <person name="Zafar N."/>
            <person name="Zhou L."/>
            <person name="Fraser C.M."/>
        </authorList>
    </citation>
    <scope>NUCLEOTIDE SEQUENCE [LARGE SCALE GENOMIC DNA]</scope>
    <source>
        <strain>ATCC 23344</strain>
    </source>
</reference>
<keyword id="KW-0028">Amino-acid biosynthesis</keyword>
<keyword id="KW-0057">Aromatic amino acid biosynthesis</keyword>
<keyword id="KW-0274">FAD</keyword>
<keyword id="KW-0285">Flavoprotein</keyword>
<keyword id="KW-0288">FMN</keyword>
<keyword id="KW-0456">Lyase</keyword>
<keyword id="KW-0521">NADP</keyword>
<keyword id="KW-1185">Reference proteome</keyword>
<feature type="chain" id="PRO_0000140566" description="Chorismate synthase">
    <location>
        <begin position="1"/>
        <end position="369"/>
    </location>
</feature>
<feature type="binding site" evidence="1">
    <location>
        <position position="48"/>
    </location>
    <ligand>
        <name>NADP(+)</name>
        <dbReference type="ChEBI" id="CHEBI:58349"/>
    </ligand>
</feature>
<feature type="binding site" evidence="1">
    <location>
        <position position="54"/>
    </location>
    <ligand>
        <name>NADP(+)</name>
        <dbReference type="ChEBI" id="CHEBI:58349"/>
    </ligand>
</feature>
<feature type="binding site" evidence="1">
    <location>
        <begin position="125"/>
        <end position="127"/>
    </location>
    <ligand>
        <name>FMN</name>
        <dbReference type="ChEBI" id="CHEBI:58210"/>
    </ligand>
</feature>
<feature type="binding site" evidence="1">
    <location>
        <begin position="238"/>
        <end position="239"/>
    </location>
    <ligand>
        <name>FMN</name>
        <dbReference type="ChEBI" id="CHEBI:58210"/>
    </ligand>
</feature>
<feature type="binding site" evidence="1">
    <location>
        <position position="278"/>
    </location>
    <ligand>
        <name>FMN</name>
        <dbReference type="ChEBI" id="CHEBI:58210"/>
    </ligand>
</feature>
<feature type="binding site" evidence="1">
    <location>
        <begin position="293"/>
        <end position="297"/>
    </location>
    <ligand>
        <name>FMN</name>
        <dbReference type="ChEBI" id="CHEBI:58210"/>
    </ligand>
</feature>
<feature type="binding site" evidence="1">
    <location>
        <position position="319"/>
    </location>
    <ligand>
        <name>FMN</name>
        <dbReference type="ChEBI" id="CHEBI:58210"/>
    </ligand>
</feature>
<evidence type="ECO:0000255" key="1">
    <source>
        <dbReference type="HAMAP-Rule" id="MF_00300"/>
    </source>
</evidence>
<accession>Q62KU7</accession>
<organism>
    <name type="scientific">Burkholderia mallei (strain ATCC 23344)</name>
    <dbReference type="NCBI Taxonomy" id="243160"/>
    <lineage>
        <taxon>Bacteria</taxon>
        <taxon>Pseudomonadati</taxon>
        <taxon>Pseudomonadota</taxon>
        <taxon>Betaproteobacteria</taxon>
        <taxon>Burkholderiales</taxon>
        <taxon>Burkholderiaceae</taxon>
        <taxon>Burkholderia</taxon>
        <taxon>pseudomallei group</taxon>
    </lineage>
</organism>
<proteinExistence type="inferred from homology"/>
<sequence>MSGNTLGTLFTVTTFGESHGPAIGCVIDGCPPGMALTEADVQLELDRRKPGTSRHVTQRQEPDQVEILSGVFEGVTTGAPIALLIRNTDQRSKDYGNIAETFRPGHADYTYWQKYGVRDYRGGGRSSARLTAPVVGAGAIAKKWLRERFGVEVRGYMSALGEIEIPFVDWSHVRENPFFAPNADIVPQLEDYMDALRKDGDSIGARIDVVASGVPVGWGEPLFDRLDADIAHAMMGINAVKGVEIGAGFASVAQRGSVHGDELTPDGFVGNHAGGVLGGISTGQDITVSIAIKPTSSIRTPRRSITRAGEPAVVETFGRHDPCVGIRATPIAESMLALVLIDHALRHRAQCGDVSSATPRIAARAPDAQ</sequence>
<dbReference type="EC" id="4.2.3.5" evidence="1"/>
<dbReference type="EMBL" id="CP000010">
    <property type="protein sequence ID" value="AAU49431.1"/>
    <property type="molecule type" value="Genomic_DNA"/>
</dbReference>
<dbReference type="RefSeq" id="WP_004266572.1">
    <property type="nucleotide sequence ID" value="NC_006348.1"/>
</dbReference>
<dbReference type="RefSeq" id="YP_102672.1">
    <property type="nucleotide sequence ID" value="NC_006348.1"/>
</dbReference>
<dbReference type="SMR" id="Q62KU7"/>
<dbReference type="GeneID" id="92978703"/>
<dbReference type="KEGG" id="bma:BMA0946"/>
<dbReference type="PATRIC" id="fig|243160.12.peg.981"/>
<dbReference type="eggNOG" id="COG0082">
    <property type="taxonomic scope" value="Bacteria"/>
</dbReference>
<dbReference type="HOGENOM" id="CLU_034547_0_2_4"/>
<dbReference type="UniPathway" id="UPA00053">
    <property type="reaction ID" value="UER00090"/>
</dbReference>
<dbReference type="Proteomes" id="UP000006693">
    <property type="component" value="Chromosome 1"/>
</dbReference>
<dbReference type="GO" id="GO:0005829">
    <property type="term" value="C:cytosol"/>
    <property type="evidence" value="ECO:0007669"/>
    <property type="project" value="TreeGrafter"/>
</dbReference>
<dbReference type="GO" id="GO:0004107">
    <property type="term" value="F:chorismate synthase activity"/>
    <property type="evidence" value="ECO:0007669"/>
    <property type="project" value="UniProtKB-UniRule"/>
</dbReference>
<dbReference type="GO" id="GO:0010181">
    <property type="term" value="F:FMN binding"/>
    <property type="evidence" value="ECO:0007669"/>
    <property type="project" value="TreeGrafter"/>
</dbReference>
<dbReference type="GO" id="GO:0008652">
    <property type="term" value="P:amino acid biosynthetic process"/>
    <property type="evidence" value="ECO:0007669"/>
    <property type="project" value="UniProtKB-KW"/>
</dbReference>
<dbReference type="GO" id="GO:0009073">
    <property type="term" value="P:aromatic amino acid family biosynthetic process"/>
    <property type="evidence" value="ECO:0007669"/>
    <property type="project" value="UniProtKB-KW"/>
</dbReference>
<dbReference type="GO" id="GO:0009423">
    <property type="term" value="P:chorismate biosynthetic process"/>
    <property type="evidence" value="ECO:0007669"/>
    <property type="project" value="UniProtKB-UniRule"/>
</dbReference>
<dbReference type="CDD" id="cd07304">
    <property type="entry name" value="Chorismate_synthase"/>
    <property type="match status" value="1"/>
</dbReference>
<dbReference type="FunFam" id="3.60.150.10:FF:000001">
    <property type="entry name" value="Chorismate synthase"/>
    <property type="match status" value="1"/>
</dbReference>
<dbReference type="Gene3D" id="3.60.150.10">
    <property type="entry name" value="Chorismate synthase AroC"/>
    <property type="match status" value="1"/>
</dbReference>
<dbReference type="HAMAP" id="MF_00300">
    <property type="entry name" value="Chorismate_synth"/>
    <property type="match status" value="1"/>
</dbReference>
<dbReference type="InterPro" id="IPR000453">
    <property type="entry name" value="Chorismate_synth"/>
</dbReference>
<dbReference type="InterPro" id="IPR035904">
    <property type="entry name" value="Chorismate_synth_AroC_sf"/>
</dbReference>
<dbReference type="InterPro" id="IPR020541">
    <property type="entry name" value="Chorismate_synthase_CS"/>
</dbReference>
<dbReference type="NCBIfam" id="TIGR00033">
    <property type="entry name" value="aroC"/>
    <property type="match status" value="1"/>
</dbReference>
<dbReference type="NCBIfam" id="NF003793">
    <property type="entry name" value="PRK05382.1"/>
    <property type="match status" value="1"/>
</dbReference>
<dbReference type="PANTHER" id="PTHR21085">
    <property type="entry name" value="CHORISMATE SYNTHASE"/>
    <property type="match status" value="1"/>
</dbReference>
<dbReference type="PANTHER" id="PTHR21085:SF0">
    <property type="entry name" value="CHORISMATE SYNTHASE"/>
    <property type="match status" value="1"/>
</dbReference>
<dbReference type="Pfam" id="PF01264">
    <property type="entry name" value="Chorismate_synt"/>
    <property type="match status" value="1"/>
</dbReference>
<dbReference type="PIRSF" id="PIRSF001456">
    <property type="entry name" value="Chorismate_synth"/>
    <property type="match status" value="1"/>
</dbReference>
<dbReference type="SUPFAM" id="SSF103263">
    <property type="entry name" value="Chorismate synthase, AroC"/>
    <property type="match status" value="1"/>
</dbReference>
<dbReference type="PROSITE" id="PS00787">
    <property type="entry name" value="CHORISMATE_SYNTHASE_1"/>
    <property type="match status" value="1"/>
</dbReference>
<dbReference type="PROSITE" id="PS00788">
    <property type="entry name" value="CHORISMATE_SYNTHASE_2"/>
    <property type="match status" value="1"/>
</dbReference>
<dbReference type="PROSITE" id="PS00789">
    <property type="entry name" value="CHORISMATE_SYNTHASE_3"/>
    <property type="match status" value="1"/>
</dbReference>
<protein>
    <recommendedName>
        <fullName evidence="1">Chorismate synthase</fullName>
        <shortName evidence="1">CS</shortName>
        <ecNumber evidence="1">4.2.3.5</ecNumber>
    </recommendedName>
    <alternativeName>
        <fullName evidence="1">5-enolpyruvylshikimate-3-phosphate phospholyase</fullName>
    </alternativeName>
</protein>